<accession>Q920A6</accession>
<sequence length="452" mass="51175">MELSRRICLVRLWLLLLSFLLGFSAGSALNWREQEGKEVWDYVTVREDARMFWWLYYATNPCKNFSELPLVMWLQGGPGGSSTGFGNFEEIGPLDTRLKPRNTTWLQWASLLFVDNPVGTGFSYVNTTDAYAKDLDTVASDMMVLLKSFFDCHKEFQTVPFYIFSESYGGKMAAGISLELHKAIQQGTIKCNFSGVALGDSWISPVDSVLSWGPYLYSVSLLDNKGLAEVSDIAEQVLNAVNKGFYKEATQLWGKAEMIIEKNTDGVNFYNILTKSTPDTSMESSLEFFRSPLVRLCQRHVRHLQGDALSQLMNGPIKKKLKIIPDDVSWGAQSSSVFISMEEDFMKPVIDIVDTLLELGVNVTVYNGQLDLIVDTIGQESWVQKLKWPQLSRFNQLKWKALYTNPKSSETSAFVKSYENLAFYWILKAGHMVPADQGDMALKMMRLVTQQE</sequence>
<protein>
    <recommendedName>
        <fullName>Retinoid-inducible serine carboxypeptidase</fullName>
        <ecNumber>3.4.16.-</ecNumber>
    </recommendedName>
    <alternativeName>
        <fullName>Serine carboxypeptidase 1</fullName>
    </alternativeName>
</protein>
<feature type="signal peptide" evidence="1">
    <location>
        <begin position="1"/>
        <end position="28"/>
    </location>
</feature>
<feature type="chain" id="PRO_0000004286" description="Retinoid-inducible serine carboxypeptidase">
    <location>
        <begin position="29"/>
        <end position="452"/>
    </location>
</feature>
<feature type="active site" evidence="2">
    <location>
        <position position="167"/>
    </location>
</feature>
<feature type="active site" evidence="2">
    <location>
        <position position="371"/>
    </location>
</feature>
<feature type="active site" evidence="2">
    <location>
        <position position="431"/>
    </location>
</feature>
<feature type="glycosylation site" description="N-linked (GlcNAc...) asparagine" evidence="1">
    <location>
        <position position="64"/>
    </location>
</feature>
<feature type="glycosylation site" description="N-linked (GlcNAc...) asparagine" evidence="1">
    <location>
        <position position="102"/>
    </location>
</feature>
<feature type="glycosylation site" description="N-linked (GlcNAc...) asparagine" evidence="1">
    <location>
        <position position="126"/>
    </location>
</feature>
<feature type="glycosylation site" description="N-linked (GlcNAc...) asparagine" evidence="1">
    <location>
        <position position="192"/>
    </location>
</feature>
<feature type="glycosylation site" description="N-linked (GlcNAc...) asparagine" evidence="1">
    <location>
        <position position="362"/>
    </location>
</feature>
<gene>
    <name type="primary">Scpep1</name>
    <name type="synonym">Risc</name>
</gene>
<organism>
    <name type="scientific">Rattus norvegicus</name>
    <name type="common">Rat</name>
    <dbReference type="NCBI Taxonomy" id="10116"/>
    <lineage>
        <taxon>Eukaryota</taxon>
        <taxon>Metazoa</taxon>
        <taxon>Chordata</taxon>
        <taxon>Craniata</taxon>
        <taxon>Vertebrata</taxon>
        <taxon>Euteleostomi</taxon>
        <taxon>Mammalia</taxon>
        <taxon>Eutheria</taxon>
        <taxon>Euarchontoglires</taxon>
        <taxon>Glires</taxon>
        <taxon>Rodentia</taxon>
        <taxon>Myomorpha</taxon>
        <taxon>Muroidea</taxon>
        <taxon>Muridae</taxon>
        <taxon>Murinae</taxon>
        <taxon>Rattus</taxon>
    </lineage>
</organism>
<evidence type="ECO:0000255" key="1"/>
<evidence type="ECO:0000255" key="2">
    <source>
        <dbReference type="PROSITE-ProRule" id="PRU10074"/>
    </source>
</evidence>
<evidence type="ECO:0000305" key="3"/>
<comment type="function">
    <text>May be involved in vascular wall and kidney homeostasis.</text>
</comment>
<comment type="subcellular location">
    <subcellularLocation>
        <location evidence="3">Secreted</location>
    </subcellularLocation>
</comment>
<comment type="tissue specificity">
    <text>Highly expressed in aorta, bladder, and kidney with much lower levels in all other tissues analyzed. Expression in kidney is restricted to proximal convoluted tubules.</text>
</comment>
<comment type="induction">
    <text>By retinoic acid.</text>
</comment>
<comment type="similarity">
    <text evidence="3">Belongs to the peptidase S10 family.</text>
</comment>
<keyword id="KW-0121">Carboxypeptidase</keyword>
<keyword id="KW-0325">Glycoprotein</keyword>
<keyword id="KW-0378">Hydrolase</keyword>
<keyword id="KW-0645">Protease</keyword>
<keyword id="KW-1185">Reference proteome</keyword>
<keyword id="KW-0964">Secreted</keyword>
<keyword id="KW-0732">Signal</keyword>
<proteinExistence type="evidence at transcript level"/>
<name>RISC_RAT</name>
<dbReference type="EC" id="3.4.16.-"/>
<dbReference type="EMBL" id="AF330051">
    <property type="protein sequence ID" value="AAK84661.1"/>
    <property type="molecule type" value="mRNA"/>
</dbReference>
<dbReference type="RefSeq" id="NP_596874.1">
    <property type="nucleotide sequence ID" value="NM_133383.2"/>
</dbReference>
<dbReference type="SMR" id="Q920A6"/>
<dbReference type="FunCoup" id="Q920A6">
    <property type="interactions" value="388"/>
</dbReference>
<dbReference type="IntAct" id="Q920A6">
    <property type="interactions" value="1"/>
</dbReference>
<dbReference type="STRING" id="10116.ENSRNOP00000003219"/>
<dbReference type="ESTHER" id="ratno-RISC">
    <property type="family name" value="Carboxypeptidase_S10"/>
</dbReference>
<dbReference type="MEROPS" id="S10.013"/>
<dbReference type="GlyCosmos" id="Q920A6">
    <property type="glycosylation" value="5 sites, No reported glycans"/>
</dbReference>
<dbReference type="GlyGen" id="Q920A6">
    <property type="glycosylation" value="5 sites"/>
</dbReference>
<dbReference type="iPTMnet" id="Q920A6"/>
<dbReference type="PhosphoSitePlus" id="Q920A6"/>
<dbReference type="jPOST" id="Q920A6"/>
<dbReference type="PaxDb" id="10116-ENSRNOP00000003219"/>
<dbReference type="GeneID" id="114861"/>
<dbReference type="KEGG" id="rno:114861"/>
<dbReference type="AGR" id="RGD:620067"/>
<dbReference type="CTD" id="59342"/>
<dbReference type="RGD" id="620067">
    <property type="gene designation" value="Scpep1"/>
</dbReference>
<dbReference type="VEuPathDB" id="HostDB:ENSRNOG00000002358"/>
<dbReference type="eggNOG" id="KOG1283">
    <property type="taxonomic scope" value="Eukaryota"/>
</dbReference>
<dbReference type="HOGENOM" id="CLU_008523_1_0_1"/>
<dbReference type="InParanoid" id="Q920A6"/>
<dbReference type="OrthoDB" id="443318at2759"/>
<dbReference type="PhylomeDB" id="Q920A6"/>
<dbReference type="TreeFam" id="TF313740"/>
<dbReference type="PRO" id="PR:Q920A6"/>
<dbReference type="Proteomes" id="UP000002494">
    <property type="component" value="Chromosome 10"/>
</dbReference>
<dbReference type="Bgee" id="ENSRNOG00000002358">
    <property type="expression patterns" value="Expressed in adult mammalian kidney and 19 other cell types or tissues"/>
</dbReference>
<dbReference type="GO" id="GO:0005576">
    <property type="term" value="C:extracellular region"/>
    <property type="evidence" value="ECO:0007669"/>
    <property type="project" value="UniProtKB-SubCell"/>
</dbReference>
<dbReference type="GO" id="GO:0004185">
    <property type="term" value="F:serine-type carboxypeptidase activity"/>
    <property type="evidence" value="ECO:0000266"/>
    <property type="project" value="RGD"/>
</dbReference>
<dbReference type="GO" id="GO:0097746">
    <property type="term" value="P:blood vessel diameter maintenance"/>
    <property type="evidence" value="ECO:0000266"/>
    <property type="project" value="RGD"/>
</dbReference>
<dbReference type="GO" id="GO:0045776">
    <property type="term" value="P:negative regulation of blood pressure"/>
    <property type="evidence" value="ECO:0000266"/>
    <property type="project" value="RGD"/>
</dbReference>
<dbReference type="GO" id="GO:0006508">
    <property type="term" value="P:proteolysis"/>
    <property type="evidence" value="ECO:0007669"/>
    <property type="project" value="UniProtKB-KW"/>
</dbReference>
<dbReference type="GO" id="GO:0042573">
    <property type="term" value="P:retinoic acid metabolic process"/>
    <property type="evidence" value="ECO:0000270"/>
    <property type="project" value="RGD"/>
</dbReference>
<dbReference type="FunFam" id="3.40.50.1820:FF:000075">
    <property type="entry name" value="Carboxypeptidase"/>
    <property type="match status" value="1"/>
</dbReference>
<dbReference type="Gene3D" id="3.40.50.1820">
    <property type="entry name" value="alpha/beta hydrolase"/>
    <property type="match status" value="1"/>
</dbReference>
<dbReference type="InterPro" id="IPR029058">
    <property type="entry name" value="AB_hydrolase_fold"/>
</dbReference>
<dbReference type="InterPro" id="IPR001563">
    <property type="entry name" value="Peptidase_S10"/>
</dbReference>
<dbReference type="InterPro" id="IPR018202">
    <property type="entry name" value="Ser_caboxypep_ser_AS"/>
</dbReference>
<dbReference type="PANTHER" id="PTHR11802:SF3">
    <property type="entry name" value="RETINOID-INDUCIBLE SERINE CARBOXYPEPTIDASE"/>
    <property type="match status" value="1"/>
</dbReference>
<dbReference type="PANTHER" id="PTHR11802">
    <property type="entry name" value="SERINE PROTEASE FAMILY S10 SERINE CARBOXYPEPTIDASE"/>
    <property type="match status" value="1"/>
</dbReference>
<dbReference type="Pfam" id="PF00450">
    <property type="entry name" value="Peptidase_S10"/>
    <property type="match status" value="1"/>
</dbReference>
<dbReference type="PRINTS" id="PR00724">
    <property type="entry name" value="CRBOXYPTASEC"/>
</dbReference>
<dbReference type="SUPFAM" id="SSF53474">
    <property type="entry name" value="alpha/beta-Hydrolases"/>
    <property type="match status" value="1"/>
</dbReference>
<dbReference type="PROSITE" id="PS00131">
    <property type="entry name" value="CARBOXYPEPT_SER_SER"/>
    <property type="match status" value="1"/>
</dbReference>
<reference key="1">
    <citation type="journal article" date="2001" name="J. Biol. Chem.">
        <title>Cloning of a novel retinoid-inducible serine carboxypeptidase from vascular smooth muscle cells.</title>
        <authorList>
            <person name="Chen J."/>
            <person name="Streb J.W."/>
            <person name="Maltby K.M."/>
            <person name="Kitchen C.M."/>
            <person name="Miano J.M."/>
        </authorList>
    </citation>
    <scope>NUCLEOTIDE SEQUENCE [MRNA]</scope>
</reference>